<comment type="subcellular location">
    <subcellularLocation>
        <location evidence="2">Membrane</location>
        <topology evidence="2">Multi-pass membrane protein</topology>
    </subcellularLocation>
</comment>
<comment type="similarity">
    <text evidence="2">Belongs to the major facilitator superfamily. Sodium/anion cotransporter family.</text>
</comment>
<feature type="chain" id="PRO_0000220942" description="Uncharacterized transporter slc-17.3" evidence="2">
    <location>
        <begin position="1"/>
        <end position="535"/>
    </location>
</feature>
<feature type="transmembrane region" description="Helical" evidence="1">
    <location>
        <begin position="17"/>
        <end position="37"/>
    </location>
</feature>
<feature type="transmembrane region" description="Helical" evidence="1">
    <location>
        <begin position="107"/>
        <end position="127"/>
    </location>
</feature>
<feature type="transmembrane region" description="Helical" evidence="1">
    <location>
        <begin position="144"/>
        <end position="164"/>
    </location>
</feature>
<feature type="transmembrane region" description="Helical" evidence="1">
    <location>
        <begin position="167"/>
        <end position="187"/>
    </location>
</feature>
<feature type="transmembrane region" description="Helical" evidence="1">
    <location>
        <begin position="199"/>
        <end position="219"/>
    </location>
</feature>
<feature type="transmembrane region" description="Helical" evidence="1">
    <location>
        <begin position="225"/>
        <end position="245"/>
    </location>
</feature>
<feature type="transmembrane region" description="Helical" evidence="1">
    <location>
        <begin position="292"/>
        <end position="312"/>
    </location>
</feature>
<feature type="transmembrane region" description="Helical" evidence="1">
    <location>
        <begin position="331"/>
        <end position="351"/>
    </location>
</feature>
<feature type="transmembrane region" description="Helical" evidence="1">
    <location>
        <begin position="368"/>
        <end position="388"/>
    </location>
</feature>
<feature type="transmembrane region" description="Helical" evidence="1">
    <location>
        <begin position="395"/>
        <end position="415"/>
    </location>
</feature>
<feature type="transmembrane region" description="Helical" evidence="1">
    <location>
        <begin position="429"/>
        <end position="451"/>
    </location>
</feature>
<feature type="transmembrane region" description="Helical" evidence="1">
    <location>
        <begin position="463"/>
        <end position="483"/>
    </location>
</feature>
<feature type="glycosylation site" description="N-linked (GlcNAc...) asparagine" evidence="1">
    <location>
        <position position="44"/>
    </location>
</feature>
<feature type="glycosylation site" description="N-linked (GlcNAc...) asparagine" evidence="1">
    <location>
        <position position="61"/>
    </location>
</feature>
<feature type="glycosylation site" description="N-linked (GlcNAc...) asparagine" evidence="1">
    <location>
        <position position="329"/>
    </location>
</feature>
<protein>
    <recommendedName>
        <fullName evidence="2">Uncharacterized transporter slc-17.3</fullName>
    </recommendedName>
</protein>
<organism>
    <name type="scientific">Caenorhabditis elegans</name>
    <dbReference type="NCBI Taxonomy" id="6239"/>
    <lineage>
        <taxon>Eukaryota</taxon>
        <taxon>Metazoa</taxon>
        <taxon>Ecdysozoa</taxon>
        <taxon>Nematoda</taxon>
        <taxon>Chromadorea</taxon>
        <taxon>Rhabditida</taxon>
        <taxon>Rhabditina</taxon>
        <taxon>Rhabditomorpha</taxon>
        <taxon>Rhabditoidea</taxon>
        <taxon>Rhabditidae</taxon>
        <taxon>Peloderinae</taxon>
        <taxon>Caenorhabditis</taxon>
    </lineage>
</organism>
<evidence type="ECO:0000255" key="1"/>
<evidence type="ECO:0000305" key="2"/>
<evidence type="ECO:0000312" key="3">
    <source>
        <dbReference type="WormBase" id="C02C2.4"/>
    </source>
</evidence>
<accession>P34272</accession>
<proteinExistence type="inferred from homology"/>
<gene>
    <name evidence="3" type="primary">slc-17.3</name>
    <name evidence="3" type="ORF">C02C2.4</name>
</gene>
<sequence length="535" mass="59250">MAKKFPLFHPFSRRLHIVLLCMIGFFCTTFMRIHFALTMTCMVNSTALAVENEIKLAGNSNVSEISIIEEINLGSNGQCGLMDEDGQKKVVVDYGGELVWNSYEQNLIFSGTFWGSLITVLPSMFFIERFSPRHVLQISVALYILVTVITPFLATHFGYFSVFLARIGMGLGEGFVFPTNNAIIGNWFPSSEKSTALSIFTLGNQIASAAGSPMVAAVCASDLGWPATFYFAGIFATGWSILWFFTASSHPAKVKMMTKKEKEYLLANVVKKVHKSEKTRSIPYSKILTSPAFLGQLQCHFFVNLFMTLFQIYLPSYFKEVLHLGVIANGTFTAIPNIFNMIFKVVWGIGIDKLKENKILSNTKAVKVSHGVASFGSSFSLILLAFFVDCSNPTTGLIFFCLMYSSMGTFVSGFYTSLLSLAPQYTATMSAISMFVAMIGRLTTPAVMSMFRKDGTAAEWQNIFIGCSLAHIFSGSIFLLFGSGELQDWAKVEDDQEMNEKEKLKTIENGIVVVEEVDVKNEMSATLVKEDSLCL</sequence>
<dbReference type="EMBL" id="FO080276">
    <property type="protein sequence ID" value="CCD62531.1"/>
    <property type="molecule type" value="Genomic_DNA"/>
</dbReference>
<dbReference type="PIR" id="S44742">
    <property type="entry name" value="S44742"/>
</dbReference>
<dbReference type="RefSeq" id="NP_498709.2">
    <property type="nucleotide sequence ID" value="NM_066308.5"/>
</dbReference>
<dbReference type="SMR" id="P34272"/>
<dbReference type="FunCoup" id="P34272">
    <property type="interactions" value="10"/>
</dbReference>
<dbReference type="GlyCosmos" id="P34272">
    <property type="glycosylation" value="3 sites, No reported glycans"/>
</dbReference>
<dbReference type="PaxDb" id="6239-C02C2.4"/>
<dbReference type="EnsemblMetazoa" id="C02C2.4.1">
    <property type="protein sequence ID" value="C02C2.4.1"/>
    <property type="gene ID" value="WBGene00015333"/>
</dbReference>
<dbReference type="GeneID" id="182107"/>
<dbReference type="KEGG" id="cel:CELE_C02C2.4"/>
<dbReference type="UCSC" id="C02C2.4">
    <property type="organism name" value="c. elegans"/>
</dbReference>
<dbReference type="AGR" id="WB:WBGene00015333"/>
<dbReference type="CTD" id="182107"/>
<dbReference type="WormBase" id="C02C2.4">
    <property type="protein sequence ID" value="CE41976"/>
    <property type="gene ID" value="WBGene00015333"/>
    <property type="gene designation" value="slc-17.3"/>
</dbReference>
<dbReference type="eggNOG" id="KOG2532">
    <property type="taxonomic scope" value="Eukaryota"/>
</dbReference>
<dbReference type="HOGENOM" id="CLU_001265_5_0_1"/>
<dbReference type="InParanoid" id="P34272"/>
<dbReference type="OMA" id="FVDCSNP"/>
<dbReference type="OrthoDB" id="2985014at2759"/>
<dbReference type="PhylomeDB" id="P34272"/>
<dbReference type="Reactome" id="R-CEL-2672351">
    <property type="pathway name" value="Stimuli-sensing channels"/>
</dbReference>
<dbReference type="Reactome" id="R-CEL-428643">
    <property type="pathway name" value="Organic anion transporters"/>
</dbReference>
<dbReference type="PRO" id="PR:P34272"/>
<dbReference type="Proteomes" id="UP000001940">
    <property type="component" value="Chromosome III"/>
</dbReference>
<dbReference type="Bgee" id="WBGene00015333">
    <property type="expression patterns" value="Expressed in larva and 2 other cell types or tissues"/>
</dbReference>
<dbReference type="GO" id="GO:0016020">
    <property type="term" value="C:membrane"/>
    <property type="evidence" value="ECO:0000318"/>
    <property type="project" value="GO_Central"/>
</dbReference>
<dbReference type="GO" id="GO:0015293">
    <property type="term" value="F:symporter activity"/>
    <property type="evidence" value="ECO:0007669"/>
    <property type="project" value="UniProtKB-KW"/>
</dbReference>
<dbReference type="GO" id="GO:0022857">
    <property type="term" value="F:transmembrane transporter activity"/>
    <property type="evidence" value="ECO:0000318"/>
    <property type="project" value="GO_Central"/>
</dbReference>
<dbReference type="GO" id="GO:0006814">
    <property type="term" value="P:sodium ion transport"/>
    <property type="evidence" value="ECO:0007669"/>
    <property type="project" value="UniProtKB-KW"/>
</dbReference>
<dbReference type="FunFam" id="1.20.1250.20:FF:000355">
    <property type="entry name" value="SLC (SoLute Carrier) homolog"/>
    <property type="match status" value="1"/>
</dbReference>
<dbReference type="Gene3D" id="1.20.1250.20">
    <property type="entry name" value="MFS general substrate transporter like domains"/>
    <property type="match status" value="2"/>
</dbReference>
<dbReference type="InterPro" id="IPR011701">
    <property type="entry name" value="MFS"/>
</dbReference>
<dbReference type="InterPro" id="IPR020846">
    <property type="entry name" value="MFS_dom"/>
</dbReference>
<dbReference type="InterPro" id="IPR050382">
    <property type="entry name" value="MFS_Na/Anion_cotransporter"/>
</dbReference>
<dbReference type="InterPro" id="IPR036259">
    <property type="entry name" value="MFS_trans_sf"/>
</dbReference>
<dbReference type="PANTHER" id="PTHR11662:SF405">
    <property type="entry name" value="PROTEIN CBG12249"/>
    <property type="match status" value="1"/>
</dbReference>
<dbReference type="PANTHER" id="PTHR11662">
    <property type="entry name" value="SOLUTE CARRIER FAMILY 17"/>
    <property type="match status" value="1"/>
</dbReference>
<dbReference type="Pfam" id="PF07690">
    <property type="entry name" value="MFS_1"/>
    <property type="match status" value="1"/>
</dbReference>
<dbReference type="SUPFAM" id="SSF103473">
    <property type="entry name" value="MFS general substrate transporter"/>
    <property type="match status" value="1"/>
</dbReference>
<dbReference type="PROSITE" id="PS50850">
    <property type="entry name" value="MFS"/>
    <property type="match status" value="1"/>
</dbReference>
<keyword id="KW-0325">Glycoprotein</keyword>
<keyword id="KW-0406">Ion transport</keyword>
<keyword id="KW-0472">Membrane</keyword>
<keyword id="KW-1185">Reference proteome</keyword>
<keyword id="KW-0915">Sodium</keyword>
<keyword id="KW-0739">Sodium transport</keyword>
<keyword id="KW-0769">Symport</keyword>
<keyword id="KW-0812">Transmembrane</keyword>
<keyword id="KW-1133">Transmembrane helix</keyword>
<keyword id="KW-0813">Transport</keyword>
<reference key="1">
    <citation type="journal article" date="1994" name="Nature">
        <title>2.2 Mb of contiguous nucleotide sequence from chromosome III of C. elegans.</title>
        <authorList>
            <person name="Wilson R."/>
            <person name="Ainscough R."/>
            <person name="Anderson K."/>
            <person name="Baynes C."/>
            <person name="Berks M."/>
            <person name="Bonfield J."/>
            <person name="Burton J."/>
            <person name="Connell M."/>
            <person name="Copsey T."/>
            <person name="Cooper J."/>
            <person name="Coulson A."/>
            <person name="Craxton M."/>
            <person name="Dear S."/>
            <person name="Du Z."/>
            <person name="Durbin R."/>
            <person name="Favello A."/>
            <person name="Fraser A."/>
            <person name="Fulton L."/>
            <person name="Gardner A."/>
            <person name="Green P."/>
            <person name="Hawkins T."/>
            <person name="Hillier L."/>
            <person name="Jier M."/>
            <person name="Johnston L."/>
            <person name="Jones M."/>
            <person name="Kershaw J."/>
            <person name="Kirsten J."/>
            <person name="Laisster N."/>
            <person name="Latreille P."/>
            <person name="Lightning J."/>
            <person name="Lloyd C."/>
            <person name="Mortimore B."/>
            <person name="O'Callaghan M."/>
            <person name="Parsons J."/>
            <person name="Percy C."/>
            <person name="Rifken L."/>
            <person name="Roopra A."/>
            <person name="Saunders D."/>
            <person name="Shownkeen R."/>
            <person name="Sims M."/>
            <person name="Smaldon N."/>
            <person name="Smith A."/>
            <person name="Smith M."/>
            <person name="Sonnhammer E."/>
            <person name="Staden R."/>
            <person name="Sulston J."/>
            <person name="Thierry-Mieg J."/>
            <person name="Thomas K."/>
            <person name="Vaudin M."/>
            <person name="Vaughan K."/>
            <person name="Waterston R."/>
            <person name="Watson A."/>
            <person name="Weinstock L."/>
            <person name="Wilkinson-Sproat J."/>
            <person name="Wohldman P."/>
        </authorList>
    </citation>
    <scope>NUCLEOTIDE SEQUENCE [LARGE SCALE GENOMIC DNA]</scope>
    <source>
        <strain>Bristol N2</strain>
    </source>
</reference>
<reference key="2">
    <citation type="journal article" date="1998" name="Science">
        <title>Genome sequence of the nematode C. elegans: a platform for investigating biology.</title>
        <authorList>
            <consortium name="The C. elegans sequencing consortium"/>
        </authorList>
    </citation>
    <scope>NUCLEOTIDE SEQUENCE [LARGE SCALE GENOMIC DNA]</scope>
    <source>
        <strain>Bristol N2</strain>
    </source>
</reference>
<name>SL173_CAEEL</name>